<gene>
    <name type="primary">RBR</name>
</gene>
<comment type="function">
    <text evidence="1">Regulator of biological processes that recruits a histone deacetylase to control gene transcription. May play a role in the entry into mitosis, negatively regulating the cell proliferation. Formation of stable complexes with geminiviridae replication-associated proteins may create a cellular environment which favors viral DNA replication (By similarity).</text>
</comment>
<comment type="subcellular location">
    <subcellularLocation>
        <location evidence="1">Nucleus</location>
    </subcellularLocation>
</comment>
<comment type="similarity">
    <text evidence="3">Belongs to the retinoblastoma protein (RB) family.</text>
</comment>
<reference key="1">
    <citation type="journal article" date="2008" name="Plant Cell">
        <title>Sexual and apomictic seed formation in Hieracium requires the plant polycomb-group gene FERTILIZATION INDEPENDENT ENDOSPERM.</title>
        <authorList>
            <person name="Rodrigues J.C.M."/>
            <person name="Tucker M.R."/>
            <person name="Johnson S.D."/>
            <person name="Hrmova M."/>
            <person name="Koltunow A.M.G."/>
        </authorList>
    </citation>
    <scope>NUCLEOTIDE SEQUENCE [MRNA]</scope>
    <source>
        <strain>cv. D3</strain>
        <tissue>Ovary</tissue>
    </source>
</reference>
<sequence length="1005" mass="112636">MEDLQPINPNTDSPTETGATTIEARFSYFCKGRLTMDDNALEEAMKLFNQSKHLFMTNASALGSGTPEEAEHYWFAFILFSMKRLSKKNDAEDAAKSNENSFKLYQILRVAKLNFVDFFKELPQFIVKTGPILSNLYGSDWETRLQAKELQANFVHLSLLSKYYKRAFKTLFKPSHDNVEGQSAVANSADYISNCHRFGWLLFLALRVHAFSRFKDLVTCTNGLVSILAILIIHIPARFRNFSMSDSSHFVKKDDKVVDLLASLCNMYETSEDELRKTMVRTNIVVEEILKKDPSMASECTNGNLDNIDTDDLTYFQDLLEEQSLSSDLDILEKDYDDAMLLEGELDERLFINDEESLLGSSSLSGGAINMTGTKRKIDSMTSPTKTITSPLSPYKSPSKMISTPVSTAMTTAKWLRTVVSPLSSFPSVDLTRFLQSCDKDVTSDVIKRARIILEAIFPSSGIPDRTVLSNTQTTNLMDNIWAEQRRLEALKLYYRVLHAMCKAESQILHGNNLTSLLTNERFHRCMLACSAELVLATHKTVTMLFPAVLERTGITAFDLSKVIESFIRHEESLPRELRRHLNSLEERLLESMVWEKGSSMYNSLTIARPNLSNEINRLGLLAGPMPSLDAIALQCNMSCGGLPPVPKRDTSPGKSGEIRSPKRVCNEYRSVLVERNSFTSPVKDRLLGIGNLKSKILSPALQSAFASPTRPHPTRGETCAETAVNLFFSKIVKLAAVRINGMVERMQLTQQIRERVYCLFQQILGQRTSLFFNRHIDQIILCCFYGVAKITQLSLTFKEIIFNYRKQPHCKPQVFRAVFVDDRSSSRRGKTGQDHVDIIMFYNEIFIPSVKPLLVELAPSNVPKNPNNQVSETNKKDESGPCPCPGSPKVSSFPSLPDMSPKKVSAVHNVYVSPLRSTKMDALISHGSKSYYACVGESTHAYQSPSKDLTAINNRLNGTRKVRGSLNFDEVDVGLVSDSLVSQSLYLQNGKGPASSSGQELKTE</sequence>
<dbReference type="EMBL" id="EU439049">
    <property type="protein sequence ID" value="ABZ85628.1"/>
    <property type="molecule type" value="mRNA"/>
</dbReference>
<dbReference type="SMR" id="B1ABR6"/>
<dbReference type="IntAct" id="B1ABR6">
    <property type="interactions" value="1"/>
</dbReference>
<dbReference type="GO" id="GO:0000785">
    <property type="term" value="C:chromatin"/>
    <property type="evidence" value="ECO:0007669"/>
    <property type="project" value="TreeGrafter"/>
</dbReference>
<dbReference type="GO" id="GO:0005634">
    <property type="term" value="C:nucleus"/>
    <property type="evidence" value="ECO:0007669"/>
    <property type="project" value="UniProtKB-SubCell"/>
</dbReference>
<dbReference type="GO" id="GO:0005667">
    <property type="term" value="C:transcription regulator complex"/>
    <property type="evidence" value="ECO:0007669"/>
    <property type="project" value="TreeGrafter"/>
</dbReference>
<dbReference type="GO" id="GO:0000977">
    <property type="term" value="F:RNA polymerase II transcription regulatory region sequence-specific DNA binding"/>
    <property type="evidence" value="ECO:0007669"/>
    <property type="project" value="TreeGrafter"/>
</dbReference>
<dbReference type="GO" id="GO:0030154">
    <property type="term" value="P:cell differentiation"/>
    <property type="evidence" value="ECO:0007669"/>
    <property type="project" value="TreeGrafter"/>
</dbReference>
<dbReference type="GO" id="GO:2000134">
    <property type="term" value="P:negative regulation of G1/S transition of mitotic cell cycle"/>
    <property type="evidence" value="ECO:0007669"/>
    <property type="project" value="TreeGrafter"/>
</dbReference>
<dbReference type="GO" id="GO:0006357">
    <property type="term" value="P:regulation of transcription by RNA polymerase II"/>
    <property type="evidence" value="ECO:0007669"/>
    <property type="project" value="InterPro"/>
</dbReference>
<dbReference type="FunFam" id="1.10.472.10:FF:000030">
    <property type="entry name" value="Retinoblastoma-related protein 1"/>
    <property type="match status" value="1"/>
</dbReference>
<dbReference type="FunFam" id="1.10.472.10:FF:000067">
    <property type="entry name" value="Retinoblastoma-related protein 1"/>
    <property type="match status" value="1"/>
</dbReference>
<dbReference type="FunFam" id="1.10.472.140:FF:000003">
    <property type="entry name" value="Retinoblastoma-related protein 1"/>
    <property type="match status" value="1"/>
</dbReference>
<dbReference type="Gene3D" id="1.10.472.140">
    <property type="match status" value="1"/>
</dbReference>
<dbReference type="Gene3D" id="1.10.472.10">
    <property type="entry name" value="Cyclin-like"/>
    <property type="match status" value="2"/>
</dbReference>
<dbReference type="InterPro" id="IPR036915">
    <property type="entry name" value="Cyclin-like_sf"/>
</dbReference>
<dbReference type="InterPro" id="IPR002720">
    <property type="entry name" value="RB_A"/>
</dbReference>
<dbReference type="InterPro" id="IPR002719">
    <property type="entry name" value="RB_B"/>
</dbReference>
<dbReference type="InterPro" id="IPR028309">
    <property type="entry name" value="RB_fam"/>
</dbReference>
<dbReference type="InterPro" id="IPR024599">
    <property type="entry name" value="RB_N"/>
</dbReference>
<dbReference type="PANTHER" id="PTHR13742:SF17">
    <property type="entry name" value="RE32990P-RELATED"/>
    <property type="match status" value="1"/>
</dbReference>
<dbReference type="PANTHER" id="PTHR13742">
    <property type="entry name" value="RETINOBLASTOMA-ASSOCIATED PROTEIN RB -RELATED"/>
    <property type="match status" value="1"/>
</dbReference>
<dbReference type="Pfam" id="PF11934">
    <property type="entry name" value="DUF3452"/>
    <property type="match status" value="1"/>
</dbReference>
<dbReference type="Pfam" id="PF01858">
    <property type="entry name" value="RB_A"/>
    <property type="match status" value="1"/>
</dbReference>
<dbReference type="Pfam" id="PF01857">
    <property type="entry name" value="RB_B"/>
    <property type="match status" value="1"/>
</dbReference>
<dbReference type="SMART" id="SM01367">
    <property type="entry name" value="DUF3452"/>
    <property type="match status" value="1"/>
</dbReference>
<dbReference type="SMART" id="SM01368">
    <property type="entry name" value="RB_A"/>
    <property type="match status" value="1"/>
</dbReference>
<dbReference type="SUPFAM" id="SSF47954">
    <property type="entry name" value="Cyclin-like"/>
    <property type="match status" value="2"/>
</dbReference>
<feature type="chain" id="PRO_0000380233" description="Retinoblastoma-related protein">
    <location>
        <begin position="1"/>
        <end position="1005"/>
    </location>
</feature>
<feature type="region of interest" description="Pocket" evidence="1">
    <location>
        <begin position="404"/>
        <end position="853"/>
    </location>
</feature>
<feature type="region of interest" description="Domain A" evidence="1">
    <location>
        <begin position="404"/>
        <end position="605"/>
    </location>
</feature>
<feature type="region of interest" description="Spacer" evidence="1">
    <location>
        <begin position="606"/>
        <end position="722"/>
    </location>
</feature>
<feature type="region of interest" description="Domain B" evidence="1">
    <location>
        <begin position="723"/>
        <end position="853"/>
    </location>
</feature>
<feature type="region of interest" description="Disordered" evidence="2">
    <location>
        <begin position="863"/>
        <end position="899"/>
    </location>
</feature>
<feature type="compositionally biased region" description="Polar residues" evidence="2">
    <location>
        <begin position="863"/>
        <end position="873"/>
    </location>
</feature>
<accession>B1ABR6</accession>
<protein>
    <recommendedName>
        <fullName>Retinoblastoma-related protein</fullName>
    </recommendedName>
</protein>
<organism>
    <name type="scientific">Pilosella piloselloides</name>
    <name type="common">Glaucous king-devil hawkweed</name>
    <name type="synonym">Hieracium piloselloides</name>
    <dbReference type="NCBI Taxonomy" id="1628030"/>
    <lineage>
        <taxon>Eukaryota</taxon>
        <taxon>Viridiplantae</taxon>
        <taxon>Streptophyta</taxon>
        <taxon>Embryophyta</taxon>
        <taxon>Tracheophyta</taxon>
        <taxon>Spermatophyta</taxon>
        <taxon>Magnoliopsida</taxon>
        <taxon>eudicotyledons</taxon>
        <taxon>Gunneridae</taxon>
        <taxon>Pentapetalae</taxon>
        <taxon>asterids</taxon>
        <taxon>campanulids</taxon>
        <taxon>Asterales</taxon>
        <taxon>Asteraceae</taxon>
        <taxon>Cichorioideae</taxon>
        <taxon>Cichorieae</taxon>
        <taxon>Hieraciinae</taxon>
        <taxon>Pilosella</taxon>
    </lineage>
</organism>
<keyword id="KW-0131">Cell cycle</keyword>
<keyword id="KW-0539">Nucleus</keyword>
<keyword id="KW-0678">Repressor</keyword>
<keyword id="KW-0804">Transcription</keyword>
<keyword id="KW-0805">Transcription regulation</keyword>
<name>RBR_PILPI</name>
<evidence type="ECO:0000250" key="1"/>
<evidence type="ECO:0000256" key="2">
    <source>
        <dbReference type="SAM" id="MobiDB-lite"/>
    </source>
</evidence>
<evidence type="ECO:0000305" key="3"/>
<proteinExistence type="evidence at transcript level"/>